<name>Y009_CHLTE</name>
<organism>
    <name type="scientific">Chlorobaculum tepidum (strain ATCC 49652 / DSM 12025 / NBRC 103806 / TLS)</name>
    <name type="common">Chlorobium tepidum</name>
    <dbReference type="NCBI Taxonomy" id="194439"/>
    <lineage>
        <taxon>Bacteria</taxon>
        <taxon>Pseudomonadati</taxon>
        <taxon>Chlorobiota</taxon>
        <taxon>Chlorobiia</taxon>
        <taxon>Chlorobiales</taxon>
        <taxon>Chlorobiaceae</taxon>
        <taxon>Chlorobaculum</taxon>
    </lineage>
</organism>
<reference key="1">
    <citation type="journal article" date="2002" name="Proc. Natl. Acad. Sci. U.S.A.">
        <title>The complete genome sequence of Chlorobium tepidum TLS, a photosynthetic, anaerobic, green-sulfur bacterium.</title>
        <authorList>
            <person name="Eisen J.A."/>
            <person name="Nelson K.E."/>
            <person name="Paulsen I.T."/>
            <person name="Heidelberg J.F."/>
            <person name="Wu M."/>
            <person name="Dodson R.J."/>
            <person name="DeBoy R.T."/>
            <person name="Gwinn M.L."/>
            <person name="Nelson W.C."/>
            <person name="Haft D.H."/>
            <person name="Hickey E.K."/>
            <person name="Peterson J.D."/>
            <person name="Durkin A.S."/>
            <person name="Kolonay J.F."/>
            <person name="Yang F."/>
            <person name="Holt I.E."/>
            <person name="Umayam L.A."/>
            <person name="Mason T.M."/>
            <person name="Brenner M."/>
            <person name="Shea T.P."/>
            <person name="Parksey D.S."/>
            <person name="Nierman W.C."/>
            <person name="Feldblyum T.V."/>
            <person name="Hansen C.L."/>
            <person name="Craven M.B."/>
            <person name="Radune D."/>
            <person name="Vamathevan J.J."/>
            <person name="Khouri H.M."/>
            <person name="White O."/>
            <person name="Gruber T.M."/>
            <person name="Ketchum K.A."/>
            <person name="Venter J.C."/>
            <person name="Tettelin H."/>
            <person name="Bryant D.A."/>
            <person name="Fraser C.M."/>
        </authorList>
    </citation>
    <scope>NUCLEOTIDE SEQUENCE [LARGE SCALE GENOMIC DNA]</scope>
    <source>
        <strain>ATCC 49652 / DSM 12025 / NBRC 103806 / TLS</strain>
    </source>
</reference>
<proteinExistence type="inferred from homology"/>
<gene>
    <name type="ordered locus">CT0009</name>
</gene>
<sequence>MHTPLEQQEIRYRKGDIIELTITDHAEKDKCFGKTTEGMGVMVSGILAPGDRVSAQIYKVKSRYLEARAIEVLEASPDRVEPVCPVFGSCGGCKWMHVSYEAQLRYKHKKVTDSLEHIGGFESPDVRPVLAAPDALHYRNKVEFSCSNMRYLLQSEIDSDQLAKPKTFALGFHAPGNFEKVLDLDTCYLAKECMNRVLNVLRDFAIERGLEPYAAKAHEGYLRNLMLRYSERHEQLMVNIVTSWYDKALMQALKERLEAAMPEQQMTLLNNVTTRKNTVATGEQEYVISGDGYVTERLGDLDFRISANSFFQTNTRQAETLYDQIIAVGGITPEDTVYDLYCGTGTITLYLARHCKQAIGIEVVESAVKDAEMNAELNGLSNTVFFQADLKNFHAMQEALEPYAKPRIIVTDPPRAGMHPKALDTMLKLQPERIVYVSCNPDNLARDGKEIAARGYRMTSAQPVDMFPQTNHIETVACFERAE</sequence>
<evidence type="ECO:0000250" key="1"/>
<evidence type="ECO:0000255" key="2">
    <source>
        <dbReference type="PROSITE-ProRule" id="PRU00208"/>
    </source>
</evidence>
<evidence type="ECO:0000255" key="3">
    <source>
        <dbReference type="PROSITE-ProRule" id="PRU01024"/>
    </source>
</evidence>
<dbReference type="EC" id="2.1.1.-"/>
<dbReference type="EMBL" id="AE006470">
    <property type="protein sequence ID" value="AAM71257.1"/>
    <property type="molecule type" value="Genomic_DNA"/>
</dbReference>
<dbReference type="RefSeq" id="NP_660915.1">
    <property type="nucleotide sequence ID" value="NC_002932.3"/>
</dbReference>
<dbReference type="SMR" id="Q8KGF9"/>
<dbReference type="STRING" id="194439.CT0009"/>
<dbReference type="DNASU" id="1006160"/>
<dbReference type="EnsemblBacteria" id="AAM71257">
    <property type="protein sequence ID" value="AAM71257"/>
    <property type="gene ID" value="CT0009"/>
</dbReference>
<dbReference type="KEGG" id="cte:CT0009"/>
<dbReference type="PATRIC" id="fig|194439.7.peg.9"/>
<dbReference type="eggNOG" id="COG2265">
    <property type="taxonomic scope" value="Bacteria"/>
</dbReference>
<dbReference type="HOGENOM" id="CLU_014689_7_2_10"/>
<dbReference type="OrthoDB" id="9804590at2"/>
<dbReference type="Proteomes" id="UP000001007">
    <property type="component" value="Chromosome"/>
</dbReference>
<dbReference type="GO" id="GO:0051539">
    <property type="term" value="F:4 iron, 4 sulfur cluster binding"/>
    <property type="evidence" value="ECO:0007669"/>
    <property type="project" value="UniProtKB-KW"/>
</dbReference>
<dbReference type="GO" id="GO:0046872">
    <property type="term" value="F:metal ion binding"/>
    <property type="evidence" value="ECO:0007669"/>
    <property type="project" value="UniProtKB-KW"/>
</dbReference>
<dbReference type="GO" id="GO:0070041">
    <property type="term" value="F:rRNA (uridine-C5-)-methyltransferase activity"/>
    <property type="evidence" value="ECO:0007669"/>
    <property type="project" value="TreeGrafter"/>
</dbReference>
<dbReference type="GO" id="GO:0070475">
    <property type="term" value="P:rRNA base methylation"/>
    <property type="evidence" value="ECO:0007669"/>
    <property type="project" value="TreeGrafter"/>
</dbReference>
<dbReference type="CDD" id="cd02440">
    <property type="entry name" value="AdoMet_MTases"/>
    <property type="match status" value="1"/>
</dbReference>
<dbReference type="FunFam" id="3.40.50.150:FF:000009">
    <property type="entry name" value="23S rRNA (Uracil(1939)-C(5))-methyltransferase RlmD"/>
    <property type="match status" value="1"/>
</dbReference>
<dbReference type="FunFam" id="2.40.50.1070:FF:000003">
    <property type="entry name" value="23S rRNA (Uracil-5-)-methyltransferase RumA"/>
    <property type="match status" value="1"/>
</dbReference>
<dbReference type="Gene3D" id="2.40.50.1070">
    <property type="match status" value="1"/>
</dbReference>
<dbReference type="Gene3D" id="2.40.50.140">
    <property type="entry name" value="Nucleic acid-binding proteins"/>
    <property type="match status" value="1"/>
</dbReference>
<dbReference type="Gene3D" id="3.40.50.150">
    <property type="entry name" value="Vaccinia Virus protein VP39"/>
    <property type="match status" value="1"/>
</dbReference>
<dbReference type="InterPro" id="IPR030390">
    <property type="entry name" value="MeTrfase_TrmA_AS"/>
</dbReference>
<dbReference type="InterPro" id="IPR030391">
    <property type="entry name" value="MeTrfase_TrmA_CS"/>
</dbReference>
<dbReference type="InterPro" id="IPR012340">
    <property type="entry name" value="NA-bd_OB-fold"/>
</dbReference>
<dbReference type="InterPro" id="IPR029063">
    <property type="entry name" value="SAM-dependent_MTases_sf"/>
</dbReference>
<dbReference type="InterPro" id="IPR002792">
    <property type="entry name" value="TRAM_dom"/>
</dbReference>
<dbReference type="InterPro" id="IPR010280">
    <property type="entry name" value="U5_MeTrfase_fam"/>
</dbReference>
<dbReference type="NCBIfam" id="TIGR00479">
    <property type="entry name" value="rumA"/>
    <property type="match status" value="1"/>
</dbReference>
<dbReference type="PANTHER" id="PTHR11061">
    <property type="entry name" value="RNA M5U METHYLTRANSFERASE"/>
    <property type="match status" value="1"/>
</dbReference>
<dbReference type="PANTHER" id="PTHR11061:SF30">
    <property type="entry name" value="TRNA (URACIL(54)-C(5))-METHYLTRANSFERASE"/>
    <property type="match status" value="1"/>
</dbReference>
<dbReference type="Pfam" id="PF01938">
    <property type="entry name" value="TRAM"/>
    <property type="match status" value="1"/>
</dbReference>
<dbReference type="Pfam" id="PF05958">
    <property type="entry name" value="tRNA_U5-meth_tr"/>
    <property type="match status" value="1"/>
</dbReference>
<dbReference type="SUPFAM" id="SSF50249">
    <property type="entry name" value="Nucleic acid-binding proteins"/>
    <property type="match status" value="1"/>
</dbReference>
<dbReference type="SUPFAM" id="SSF53335">
    <property type="entry name" value="S-adenosyl-L-methionine-dependent methyltransferases"/>
    <property type="match status" value="1"/>
</dbReference>
<dbReference type="PROSITE" id="PS51687">
    <property type="entry name" value="SAM_MT_RNA_M5U"/>
    <property type="match status" value="1"/>
</dbReference>
<dbReference type="PROSITE" id="PS50926">
    <property type="entry name" value="TRAM"/>
    <property type="match status" value="1"/>
</dbReference>
<dbReference type="PROSITE" id="PS01230">
    <property type="entry name" value="TRMA_1"/>
    <property type="match status" value="1"/>
</dbReference>
<dbReference type="PROSITE" id="PS01231">
    <property type="entry name" value="TRMA_2"/>
    <property type="match status" value="1"/>
</dbReference>
<feature type="chain" id="PRO_0000161966" description="Uncharacterized RNA methyltransferase CT0009">
    <location>
        <begin position="1"/>
        <end position="483"/>
    </location>
</feature>
<feature type="domain" description="TRAM" evidence="2">
    <location>
        <begin position="11"/>
        <end position="71"/>
    </location>
</feature>
<feature type="active site" description="Nucleophile" evidence="3">
    <location>
        <position position="439"/>
    </location>
</feature>
<feature type="binding site" evidence="1">
    <location>
        <position position="84"/>
    </location>
    <ligand>
        <name>[4Fe-4S] cluster</name>
        <dbReference type="ChEBI" id="CHEBI:49883"/>
    </ligand>
</feature>
<feature type="binding site" evidence="1">
    <location>
        <position position="90"/>
    </location>
    <ligand>
        <name>[4Fe-4S] cluster</name>
        <dbReference type="ChEBI" id="CHEBI:49883"/>
    </ligand>
</feature>
<feature type="binding site" evidence="1">
    <location>
        <position position="93"/>
    </location>
    <ligand>
        <name>[4Fe-4S] cluster</name>
        <dbReference type="ChEBI" id="CHEBI:49883"/>
    </ligand>
</feature>
<feature type="binding site" evidence="1">
    <location>
        <position position="187"/>
    </location>
    <ligand>
        <name>[4Fe-4S] cluster</name>
        <dbReference type="ChEBI" id="CHEBI:49883"/>
    </ligand>
</feature>
<feature type="binding site" evidence="3">
    <location>
        <position position="312"/>
    </location>
    <ligand>
        <name>S-adenosyl-L-methionine</name>
        <dbReference type="ChEBI" id="CHEBI:59789"/>
    </ligand>
</feature>
<feature type="binding site" evidence="3">
    <location>
        <position position="341"/>
    </location>
    <ligand>
        <name>S-adenosyl-L-methionine</name>
        <dbReference type="ChEBI" id="CHEBI:59789"/>
    </ligand>
</feature>
<feature type="binding site" evidence="3">
    <location>
        <position position="362"/>
    </location>
    <ligand>
        <name>S-adenosyl-L-methionine</name>
        <dbReference type="ChEBI" id="CHEBI:59789"/>
    </ligand>
</feature>
<feature type="binding site" evidence="3">
    <location>
        <position position="412"/>
    </location>
    <ligand>
        <name>S-adenosyl-L-methionine</name>
        <dbReference type="ChEBI" id="CHEBI:59789"/>
    </ligand>
</feature>
<keyword id="KW-0004">4Fe-4S</keyword>
<keyword id="KW-0408">Iron</keyword>
<keyword id="KW-0411">Iron-sulfur</keyword>
<keyword id="KW-0479">Metal-binding</keyword>
<keyword id="KW-0489">Methyltransferase</keyword>
<keyword id="KW-1185">Reference proteome</keyword>
<keyword id="KW-0949">S-adenosyl-L-methionine</keyword>
<keyword id="KW-0808">Transferase</keyword>
<comment type="similarity">
    <text evidence="3">Belongs to the class I-like SAM-binding methyltransferase superfamily. RNA M5U methyltransferase family.</text>
</comment>
<protein>
    <recommendedName>
        <fullName>Uncharacterized RNA methyltransferase CT0009</fullName>
        <ecNumber>2.1.1.-</ecNumber>
    </recommendedName>
</protein>
<accession>Q8KGF9</accession>